<comment type="similarity">
    <text evidence="1">Belongs to the LTO1 family.</text>
</comment>
<accession>Q75JW3</accession>
<accession>Q559V8</accession>
<evidence type="ECO:0000305" key="1"/>
<name>LTO1_DICDI</name>
<gene>
    <name type="ORF">DDB_G0272178</name>
</gene>
<feature type="chain" id="PRO_0000331265" description="Protein LTO1 homolog">
    <location>
        <begin position="1"/>
        <end position="139"/>
    </location>
</feature>
<protein>
    <recommendedName>
        <fullName>Protein LTO1 homolog</fullName>
    </recommendedName>
</protein>
<organism>
    <name type="scientific">Dictyostelium discoideum</name>
    <name type="common">Social amoeba</name>
    <dbReference type="NCBI Taxonomy" id="44689"/>
    <lineage>
        <taxon>Eukaryota</taxon>
        <taxon>Amoebozoa</taxon>
        <taxon>Evosea</taxon>
        <taxon>Eumycetozoa</taxon>
        <taxon>Dictyostelia</taxon>
        <taxon>Dictyosteliales</taxon>
        <taxon>Dictyosteliaceae</taxon>
        <taxon>Dictyostelium</taxon>
    </lineage>
</organism>
<keyword id="KW-1185">Reference proteome</keyword>
<sequence length="139" mass="16031">MKEFDQLLSVESDAYISSKEQGIDDGKRLGYVEGYQLGFEKGIELGQEIGYYQSCVTVWNHLVSINNNNNNNNNNNKNNLKFSVRGIQNLEKLTKLLEDYHLDFNDENIMNTLSEIRLKFKLTSVQLGLQTKENDELSF</sequence>
<dbReference type="EMBL" id="AAFI02000008">
    <property type="protein sequence ID" value="EAL71241.1"/>
    <property type="molecule type" value="Genomic_DNA"/>
</dbReference>
<dbReference type="RefSeq" id="XP_645226.1">
    <property type="nucleotide sequence ID" value="XM_640134.1"/>
</dbReference>
<dbReference type="SMR" id="Q75JW3"/>
<dbReference type="STRING" id="44689.Q75JW3"/>
<dbReference type="PaxDb" id="44689-DDB0267126"/>
<dbReference type="EnsemblProtists" id="EAL71241">
    <property type="protein sequence ID" value="EAL71241"/>
    <property type="gene ID" value="DDB_G0272178"/>
</dbReference>
<dbReference type="GeneID" id="8618396"/>
<dbReference type="KEGG" id="ddi:DDB_G0272178"/>
<dbReference type="dictyBase" id="DDB_G0272178"/>
<dbReference type="VEuPathDB" id="AmoebaDB:DDB_G0272178"/>
<dbReference type="eggNOG" id="ENOG502RSN3">
    <property type="taxonomic scope" value="Eukaryota"/>
</dbReference>
<dbReference type="HOGENOM" id="CLU_093191_3_0_1"/>
<dbReference type="InParanoid" id="Q75JW3"/>
<dbReference type="OMA" id="FKQVCSM"/>
<dbReference type="PhylomeDB" id="Q75JW3"/>
<dbReference type="PRO" id="PR:Q75JW3"/>
<dbReference type="Proteomes" id="UP000002195">
    <property type="component" value="Chromosome 2"/>
</dbReference>
<dbReference type="GO" id="GO:0005634">
    <property type="term" value="C:nucleus"/>
    <property type="evidence" value="ECO:0000250"/>
    <property type="project" value="UniProtKB"/>
</dbReference>
<dbReference type="GO" id="GO:0051604">
    <property type="term" value="P:protein maturation"/>
    <property type="evidence" value="ECO:0000250"/>
    <property type="project" value="UniProtKB"/>
</dbReference>
<dbReference type="GO" id="GO:0042273">
    <property type="term" value="P:ribosomal large subunit biogenesis"/>
    <property type="evidence" value="ECO:0000250"/>
    <property type="project" value="UniProtKB"/>
</dbReference>
<dbReference type="GO" id="GO:0006413">
    <property type="term" value="P:translational initiation"/>
    <property type="evidence" value="ECO:0000250"/>
    <property type="project" value="UniProtKB"/>
</dbReference>
<dbReference type="InterPro" id="IPR019191">
    <property type="entry name" value="Essential_protein_Yae1_N"/>
</dbReference>
<dbReference type="InterPro" id="IPR052436">
    <property type="entry name" value="LTO1_adapter"/>
</dbReference>
<dbReference type="PANTHER" id="PTHR28532">
    <property type="entry name" value="GEO13458P1"/>
    <property type="match status" value="1"/>
</dbReference>
<dbReference type="PANTHER" id="PTHR28532:SF1">
    <property type="entry name" value="ORAL CANCER OVEREXPRESSED 1"/>
    <property type="match status" value="1"/>
</dbReference>
<dbReference type="Pfam" id="PF09811">
    <property type="entry name" value="Yae1_N"/>
    <property type="match status" value="1"/>
</dbReference>
<proteinExistence type="inferred from homology"/>
<reference key="1">
    <citation type="journal article" date="2002" name="Nature">
        <title>Sequence and analysis of chromosome 2 of Dictyostelium discoideum.</title>
        <authorList>
            <person name="Gloeckner G."/>
            <person name="Eichinger L."/>
            <person name="Szafranski K."/>
            <person name="Pachebat J.A."/>
            <person name="Bankier A.T."/>
            <person name="Dear P.H."/>
            <person name="Lehmann R."/>
            <person name="Baumgart C."/>
            <person name="Parra G."/>
            <person name="Abril J.F."/>
            <person name="Guigo R."/>
            <person name="Kumpf K."/>
            <person name="Tunggal B."/>
            <person name="Cox E.C."/>
            <person name="Quail M.A."/>
            <person name="Platzer M."/>
            <person name="Rosenthal A."/>
            <person name="Noegel A.A."/>
        </authorList>
    </citation>
    <scope>NUCLEOTIDE SEQUENCE [LARGE SCALE GENOMIC DNA]</scope>
    <source>
        <strain>AX4</strain>
    </source>
</reference>
<reference key="2">
    <citation type="journal article" date="2005" name="Nature">
        <title>The genome of the social amoeba Dictyostelium discoideum.</title>
        <authorList>
            <person name="Eichinger L."/>
            <person name="Pachebat J.A."/>
            <person name="Gloeckner G."/>
            <person name="Rajandream M.A."/>
            <person name="Sucgang R."/>
            <person name="Berriman M."/>
            <person name="Song J."/>
            <person name="Olsen R."/>
            <person name="Szafranski K."/>
            <person name="Xu Q."/>
            <person name="Tunggal B."/>
            <person name="Kummerfeld S."/>
            <person name="Madera M."/>
            <person name="Konfortov B.A."/>
            <person name="Rivero F."/>
            <person name="Bankier A.T."/>
            <person name="Lehmann R."/>
            <person name="Hamlin N."/>
            <person name="Davies R."/>
            <person name="Gaudet P."/>
            <person name="Fey P."/>
            <person name="Pilcher K."/>
            <person name="Chen G."/>
            <person name="Saunders D."/>
            <person name="Sodergren E.J."/>
            <person name="Davis P."/>
            <person name="Kerhornou A."/>
            <person name="Nie X."/>
            <person name="Hall N."/>
            <person name="Anjard C."/>
            <person name="Hemphill L."/>
            <person name="Bason N."/>
            <person name="Farbrother P."/>
            <person name="Desany B."/>
            <person name="Just E."/>
            <person name="Morio T."/>
            <person name="Rost R."/>
            <person name="Churcher C.M."/>
            <person name="Cooper J."/>
            <person name="Haydock S."/>
            <person name="van Driessche N."/>
            <person name="Cronin A."/>
            <person name="Goodhead I."/>
            <person name="Muzny D.M."/>
            <person name="Mourier T."/>
            <person name="Pain A."/>
            <person name="Lu M."/>
            <person name="Harper D."/>
            <person name="Lindsay R."/>
            <person name="Hauser H."/>
            <person name="James K.D."/>
            <person name="Quiles M."/>
            <person name="Madan Babu M."/>
            <person name="Saito T."/>
            <person name="Buchrieser C."/>
            <person name="Wardroper A."/>
            <person name="Felder M."/>
            <person name="Thangavelu M."/>
            <person name="Johnson D."/>
            <person name="Knights A."/>
            <person name="Loulseged H."/>
            <person name="Mungall K.L."/>
            <person name="Oliver K."/>
            <person name="Price C."/>
            <person name="Quail M.A."/>
            <person name="Urushihara H."/>
            <person name="Hernandez J."/>
            <person name="Rabbinowitsch E."/>
            <person name="Steffen D."/>
            <person name="Sanders M."/>
            <person name="Ma J."/>
            <person name="Kohara Y."/>
            <person name="Sharp S."/>
            <person name="Simmonds M.N."/>
            <person name="Spiegler S."/>
            <person name="Tivey A."/>
            <person name="Sugano S."/>
            <person name="White B."/>
            <person name="Walker D."/>
            <person name="Woodward J.R."/>
            <person name="Winckler T."/>
            <person name="Tanaka Y."/>
            <person name="Shaulsky G."/>
            <person name="Schleicher M."/>
            <person name="Weinstock G.M."/>
            <person name="Rosenthal A."/>
            <person name="Cox E.C."/>
            <person name="Chisholm R.L."/>
            <person name="Gibbs R.A."/>
            <person name="Loomis W.F."/>
            <person name="Platzer M."/>
            <person name="Kay R.R."/>
            <person name="Williams J.G."/>
            <person name="Dear P.H."/>
            <person name="Noegel A.A."/>
            <person name="Barrell B.G."/>
            <person name="Kuspa A."/>
        </authorList>
    </citation>
    <scope>NUCLEOTIDE SEQUENCE [LARGE SCALE GENOMIC DNA]</scope>
    <source>
        <strain>AX4</strain>
    </source>
</reference>